<reference key="1">
    <citation type="submission" date="2007-02" db="EMBL/GenBank/DDBJ databases">
        <title>Complete sequence of Mycobacterium sp. JLS.</title>
        <authorList>
            <consortium name="US DOE Joint Genome Institute"/>
            <person name="Copeland A."/>
            <person name="Lucas S."/>
            <person name="Lapidus A."/>
            <person name="Barry K."/>
            <person name="Detter J.C."/>
            <person name="Glavina del Rio T."/>
            <person name="Hammon N."/>
            <person name="Israni S."/>
            <person name="Dalin E."/>
            <person name="Tice H."/>
            <person name="Pitluck S."/>
            <person name="Chain P."/>
            <person name="Malfatti S."/>
            <person name="Shin M."/>
            <person name="Vergez L."/>
            <person name="Schmutz J."/>
            <person name="Larimer F."/>
            <person name="Land M."/>
            <person name="Hauser L."/>
            <person name="Kyrpides N."/>
            <person name="Mikhailova N."/>
            <person name="Miller C.D."/>
            <person name="Anderson A.J."/>
            <person name="Sims R.C."/>
            <person name="Richardson P."/>
        </authorList>
    </citation>
    <scope>NUCLEOTIDE SEQUENCE [LARGE SCALE GENOMIC DNA]</scope>
    <source>
        <strain>JLS</strain>
    </source>
</reference>
<comment type="function">
    <text evidence="1">NDH-1 shuttles electrons from NADH, via FMN and iron-sulfur (Fe-S) centers, to quinones in the respiratory chain. The immediate electron acceptor for the enzyme in this species is believed to be menaquinone. Couples the redox reaction to proton translocation (for every two electrons transferred, four hydrogen ions are translocated across the cytoplasmic membrane), and thus conserves the redox energy in a proton gradient. This subunit may bind ubiquinone (By similarity).</text>
</comment>
<comment type="catalytic activity">
    <reaction evidence="1">
        <text>a quinone + NADH + 5 H(+)(in) = a quinol + NAD(+) + 4 H(+)(out)</text>
        <dbReference type="Rhea" id="RHEA:57888"/>
        <dbReference type="ChEBI" id="CHEBI:15378"/>
        <dbReference type="ChEBI" id="CHEBI:24646"/>
        <dbReference type="ChEBI" id="CHEBI:57540"/>
        <dbReference type="ChEBI" id="CHEBI:57945"/>
        <dbReference type="ChEBI" id="CHEBI:132124"/>
    </reaction>
</comment>
<comment type="subunit">
    <text evidence="1">NDH-1 is composed of 14 different subunits. Subunits NuoA, H, J, K, L, M, N constitute the membrane sector of the complex.</text>
</comment>
<comment type="subcellular location">
    <subcellularLocation>
        <location evidence="1">Cell membrane</location>
        <topology evidence="1">Multi-pass membrane protein</topology>
    </subcellularLocation>
</comment>
<comment type="similarity">
    <text evidence="1">Belongs to the complex I subunit 1 family.</text>
</comment>
<dbReference type="EC" id="7.1.1.-" evidence="1"/>
<dbReference type="EMBL" id="CP000580">
    <property type="protein sequence ID" value="ABN97341.1"/>
    <property type="molecule type" value="Genomic_DNA"/>
</dbReference>
<dbReference type="SMR" id="A3PWR4"/>
<dbReference type="KEGG" id="mjl:Mjls_1543"/>
<dbReference type="HOGENOM" id="CLU_015134_0_0_11"/>
<dbReference type="BioCyc" id="MSP164757:G1G8C-1560-MONOMER"/>
<dbReference type="GO" id="GO:0005886">
    <property type="term" value="C:plasma membrane"/>
    <property type="evidence" value="ECO:0007669"/>
    <property type="project" value="UniProtKB-SubCell"/>
</dbReference>
<dbReference type="GO" id="GO:0003954">
    <property type="term" value="F:NADH dehydrogenase activity"/>
    <property type="evidence" value="ECO:0007669"/>
    <property type="project" value="TreeGrafter"/>
</dbReference>
<dbReference type="GO" id="GO:0016655">
    <property type="term" value="F:oxidoreductase activity, acting on NAD(P)H, quinone or similar compound as acceptor"/>
    <property type="evidence" value="ECO:0007669"/>
    <property type="project" value="UniProtKB-UniRule"/>
</dbReference>
<dbReference type="GO" id="GO:0048038">
    <property type="term" value="F:quinone binding"/>
    <property type="evidence" value="ECO:0007669"/>
    <property type="project" value="UniProtKB-KW"/>
</dbReference>
<dbReference type="GO" id="GO:0009060">
    <property type="term" value="P:aerobic respiration"/>
    <property type="evidence" value="ECO:0007669"/>
    <property type="project" value="TreeGrafter"/>
</dbReference>
<dbReference type="HAMAP" id="MF_01350">
    <property type="entry name" value="NDH1_NuoH"/>
    <property type="match status" value="1"/>
</dbReference>
<dbReference type="InterPro" id="IPR001694">
    <property type="entry name" value="NADH_UbQ_OxRdtase_su1/FPO"/>
</dbReference>
<dbReference type="InterPro" id="IPR018086">
    <property type="entry name" value="NADH_UbQ_OxRdtase_su1_CS"/>
</dbReference>
<dbReference type="NCBIfam" id="NF004741">
    <property type="entry name" value="PRK06076.1-2"/>
    <property type="match status" value="1"/>
</dbReference>
<dbReference type="NCBIfam" id="NF004743">
    <property type="entry name" value="PRK06076.1-4"/>
    <property type="match status" value="1"/>
</dbReference>
<dbReference type="PANTHER" id="PTHR11432">
    <property type="entry name" value="NADH DEHYDROGENASE SUBUNIT 1"/>
    <property type="match status" value="1"/>
</dbReference>
<dbReference type="PANTHER" id="PTHR11432:SF3">
    <property type="entry name" value="NADH-UBIQUINONE OXIDOREDUCTASE CHAIN 1"/>
    <property type="match status" value="1"/>
</dbReference>
<dbReference type="Pfam" id="PF00146">
    <property type="entry name" value="NADHdh"/>
    <property type="match status" value="1"/>
</dbReference>
<dbReference type="PROSITE" id="PS00667">
    <property type="entry name" value="COMPLEX1_ND1_1"/>
    <property type="match status" value="1"/>
</dbReference>
<dbReference type="PROSITE" id="PS00668">
    <property type="entry name" value="COMPLEX1_ND1_2"/>
    <property type="match status" value="1"/>
</dbReference>
<proteinExistence type="inferred from homology"/>
<evidence type="ECO:0000255" key="1">
    <source>
        <dbReference type="HAMAP-Rule" id="MF_01350"/>
    </source>
</evidence>
<organism>
    <name type="scientific">Mycobacterium sp. (strain JLS)</name>
    <dbReference type="NCBI Taxonomy" id="164757"/>
    <lineage>
        <taxon>Bacteria</taxon>
        <taxon>Bacillati</taxon>
        <taxon>Actinomycetota</taxon>
        <taxon>Actinomycetes</taxon>
        <taxon>Mycobacteriales</taxon>
        <taxon>Mycobacteriaceae</taxon>
        <taxon>Mycobacterium</taxon>
    </lineage>
</organism>
<name>NUOH_MYCSJ</name>
<sequence length="416" mass="45215">MIHPDPTLFGHDPWWLILAKAVGVFVFLVLTVLAAILIERKVLGRMQMRFGPNRVGPKGLLQSLADGIKLALKEGITPAGVDKPVYLLAPVISVIPAFLAFAVIPMGGEVSVFGHRTALQLTDLAVAVLYILAVTSVGVYGIVLAGWASGSTYPLLGGLRSSAQVVSYEIAMALSFATVFLYAGTMSTSGIVAAQTSTWYVFLLLPSFLVYVTSMVGETNRAPFDLPEAEGELVGGFHTEYSSLKFAMFMLAEYVNMTTVSALATTMFLGGWHAPWPISLWEGANSGWWPLLWFTAKVWVFLFVYIWLRGTLPRLRYDQFMAIGWKMLIPVSLAWIMIVATAHSLRTTGHGGWASGLLIAGTVLTFGLAVVLWRTMRFRADRTVPARTAADVFPIPPIPGRAGAARTPESRETTDA</sequence>
<keyword id="KW-1003">Cell membrane</keyword>
<keyword id="KW-0472">Membrane</keyword>
<keyword id="KW-0520">NAD</keyword>
<keyword id="KW-0874">Quinone</keyword>
<keyword id="KW-1278">Translocase</keyword>
<keyword id="KW-0812">Transmembrane</keyword>
<keyword id="KW-1133">Transmembrane helix</keyword>
<accession>A3PWR4</accession>
<protein>
    <recommendedName>
        <fullName evidence="1">NADH-quinone oxidoreductase subunit H</fullName>
        <ecNumber evidence="1">7.1.1.-</ecNumber>
    </recommendedName>
    <alternativeName>
        <fullName evidence="1">NADH dehydrogenase I subunit H</fullName>
    </alternativeName>
    <alternativeName>
        <fullName evidence="1">NDH-1 subunit H</fullName>
    </alternativeName>
</protein>
<feature type="chain" id="PRO_0000299941" description="NADH-quinone oxidoreductase subunit H">
    <location>
        <begin position="1"/>
        <end position="416"/>
    </location>
</feature>
<feature type="transmembrane region" description="Helical" evidence="1">
    <location>
        <begin position="16"/>
        <end position="36"/>
    </location>
</feature>
<feature type="transmembrane region" description="Helical" evidence="1">
    <location>
        <begin position="84"/>
        <end position="104"/>
    </location>
</feature>
<feature type="transmembrane region" description="Helical" evidence="1">
    <location>
        <begin position="124"/>
        <end position="144"/>
    </location>
</feature>
<feature type="transmembrane region" description="Helical" evidence="1">
    <location>
        <begin position="165"/>
        <end position="185"/>
    </location>
</feature>
<feature type="transmembrane region" description="Helical" evidence="1">
    <location>
        <begin position="197"/>
        <end position="217"/>
    </location>
</feature>
<feature type="transmembrane region" description="Helical" evidence="1">
    <location>
        <begin position="260"/>
        <end position="280"/>
    </location>
</feature>
<feature type="transmembrane region" description="Helical" evidence="1">
    <location>
        <begin position="288"/>
        <end position="308"/>
    </location>
</feature>
<feature type="transmembrane region" description="Helical" evidence="1">
    <location>
        <begin position="320"/>
        <end position="340"/>
    </location>
</feature>
<feature type="transmembrane region" description="Helical" evidence="1">
    <location>
        <begin position="353"/>
        <end position="373"/>
    </location>
</feature>
<gene>
    <name evidence="1" type="primary">nuoH</name>
    <name type="ordered locus">Mjls_1543</name>
</gene>